<proteinExistence type="inferred from homology"/>
<feature type="chain" id="PRO_1000134726" description="Probable DNA ligase">
    <location>
        <begin position="1"/>
        <end position="507"/>
    </location>
</feature>
<feature type="active site" description="N6-AMP-lysine intermediate" evidence="1">
    <location>
        <position position="211"/>
    </location>
</feature>
<feature type="binding site" evidence="1">
    <location>
        <position position="209"/>
    </location>
    <ligand>
        <name>ATP</name>
        <dbReference type="ChEBI" id="CHEBI:30616"/>
    </ligand>
</feature>
<feature type="binding site" evidence="1">
    <location>
        <position position="216"/>
    </location>
    <ligand>
        <name>ATP</name>
        <dbReference type="ChEBI" id="CHEBI:30616"/>
    </ligand>
</feature>
<feature type="binding site" evidence="1">
    <location>
        <position position="231"/>
    </location>
    <ligand>
        <name>ATP</name>
        <dbReference type="ChEBI" id="CHEBI:30616"/>
    </ligand>
</feature>
<feature type="binding site" evidence="1">
    <location>
        <position position="260"/>
    </location>
    <ligand>
        <name>ATP</name>
        <dbReference type="ChEBI" id="CHEBI:30616"/>
    </ligand>
</feature>
<feature type="binding site" evidence="1">
    <location>
        <position position="295"/>
    </location>
    <ligand>
        <name>ATP</name>
        <dbReference type="ChEBI" id="CHEBI:30616"/>
    </ligand>
</feature>
<feature type="binding site" evidence="1">
    <location>
        <position position="366"/>
    </location>
    <ligand>
        <name>ATP</name>
        <dbReference type="ChEBI" id="CHEBI:30616"/>
    </ligand>
</feature>
<feature type="binding site" evidence="1">
    <location>
        <position position="372"/>
    </location>
    <ligand>
        <name>ATP</name>
        <dbReference type="ChEBI" id="CHEBI:30616"/>
    </ligand>
</feature>
<evidence type="ECO:0000255" key="1">
    <source>
        <dbReference type="HAMAP-Rule" id="MF_00407"/>
    </source>
</evidence>
<keyword id="KW-0067">ATP-binding</keyword>
<keyword id="KW-0131">Cell cycle</keyword>
<keyword id="KW-0132">Cell division</keyword>
<keyword id="KW-0227">DNA damage</keyword>
<keyword id="KW-0233">DNA recombination</keyword>
<keyword id="KW-0234">DNA repair</keyword>
<keyword id="KW-0235">DNA replication</keyword>
<keyword id="KW-0436">Ligase</keyword>
<keyword id="KW-0460">Magnesium</keyword>
<keyword id="KW-0479">Metal-binding</keyword>
<keyword id="KW-0547">Nucleotide-binding</keyword>
<comment type="function">
    <text evidence="1">DNA ligase that seals nicks in double-stranded DNA during DNA replication, DNA recombination and DNA repair.</text>
</comment>
<comment type="catalytic activity">
    <reaction evidence="1">
        <text>ATP + (deoxyribonucleotide)n-3'-hydroxyl + 5'-phospho-(deoxyribonucleotide)m = (deoxyribonucleotide)n+m + AMP + diphosphate.</text>
        <dbReference type="EC" id="6.5.1.1"/>
    </reaction>
</comment>
<comment type="cofactor">
    <cofactor evidence="1">
        <name>Mg(2+)</name>
        <dbReference type="ChEBI" id="CHEBI:18420"/>
    </cofactor>
</comment>
<comment type="similarity">
    <text evidence="1">Belongs to the ATP-dependent DNA ligase family.</text>
</comment>
<dbReference type="EC" id="6.5.1.1" evidence="1"/>
<dbReference type="EMBL" id="CP001341">
    <property type="protein sequence ID" value="ACL40557.1"/>
    <property type="molecule type" value="Genomic_DNA"/>
</dbReference>
<dbReference type="RefSeq" id="WP_015937767.1">
    <property type="nucleotide sequence ID" value="NC_011886.1"/>
</dbReference>
<dbReference type="SMR" id="B8HCE1"/>
<dbReference type="STRING" id="452863.Achl_2592"/>
<dbReference type="KEGG" id="ach:Achl_2592"/>
<dbReference type="eggNOG" id="COG1793">
    <property type="taxonomic scope" value="Bacteria"/>
</dbReference>
<dbReference type="HOGENOM" id="CLU_005138_6_1_11"/>
<dbReference type="OrthoDB" id="3733803at2"/>
<dbReference type="Proteomes" id="UP000002505">
    <property type="component" value="Chromosome"/>
</dbReference>
<dbReference type="GO" id="GO:0005524">
    <property type="term" value="F:ATP binding"/>
    <property type="evidence" value="ECO:0007669"/>
    <property type="project" value="UniProtKB-UniRule"/>
</dbReference>
<dbReference type="GO" id="GO:0003677">
    <property type="term" value="F:DNA binding"/>
    <property type="evidence" value="ECO:0007669"/>
    <property type="project" value="InterPro"/>
</dbReference>
<dbReference type="GO" id="GO:0003910">
    <property type="term" value="F:DNA ligase (ATP) activity"/>
    <property type="evidence" value="ECO:0007669"/>
    <property type="project" value="UniProtKB-UniRule"/>
</dbReference>
<dbReference type="GO" id="GO:0046872">
    <property type="term" value="F:metal ion binding"/>
    <property type="evidence" value="ECO:0007669"/>
    <property type="project" value="UniProtKB-KW"/>
</dbReference>
<dbReference type="GO" id="GO:0051301">
    <property type="term" value="P:cell division"/>
    <property type="evidence" value="ECO:0007669"/>
    <property type="project" value="UniProtKB-KW"/>
</dbReference>
<dbReference type="GO" id="GO:0071897">
    <property type="term" value="P:DNA biosynthetic process"/>
    <property type="evidence" value="ECO:0007669"/>
    <property type="project" value="InterPro"/>
</dbReference>
<dbReference type="GO" id="GO:0006310">
    <property type="term" value="P:DNA recombination"/>
    <property type="evidence" value="ECO:0007669"/>
    <property type="project" value="UniProtKB-UniRule"/>
</dbReference>
<dbReference type="GO" id="GO:0006281">
    <property type="term" value="P:DNA repair"/>
    <property type="evidence" value="ECO:0007669"/>
    <property type="project" value="UniProtKB-UniRule"/>
</dbReference>
<dbReference type="GO" id="GO:0006260">
    <property type="term" value="P:DNA replication"/>
    <property type="evidence" value="ECO:0007669"/>
    <property type="project" value="UniProtKB-UniRule"/>
</dbReference>
<dbReference type="CDD" id="cd07901">
    <property type="entry name" value="Adenylation_DNA_ligase_Arch_LigB"/>
    <property type="match status" value="1"/>
</dbReference>
<dbReference type="Gene3D" id="1.10.3260.10">
    <property type="entry name" value="DNA ligase, ATP-dependent, N-terminal domain"/>
    <property type="match status" value="1"/>
</dbReference>
<dbReference type="Gene3D" id="3.30.470.30">
    <property type="entry name" value="DNA ligase/mRNA capping enzyme"/>
    <property type="match status" value="1"/>
</dbReference>
<dbReference type="Gene3D" id="2.40.50.140">
    <property type="entry name" value="Nucleic acid-binding proteins"/>
    <property type="match status" value="1"/>
</dbReference>
<dbReference type="HAMAP" id="MF_00407">
    <property type="entry name" value="DNA_ligase"/>
    <property type="match status" value="1"/>
</dbReference>
<dbReference type="InterPro" id="IPR050191">
    <property type="entry name" value="ATP-dep_DNA_ligase"/>
</dbReference>
<dbReference type="InterPro" id="IPR022865">
    <property type="entry name" value="DNA_ligae_ATP-dep_bac/arc"/>
</dbReference>
<dbReference type="InterPro" id="IPR000977">
    <property type="entry name" value="DNA_ligase_ATP-dep"/>
</dbReference>
<dbReference type="InterPro" id="IPR012309">
    <property type="entry name" value="DNA_ligase_ATP-dep_C"/>
</dbReference>
<dbReference type="InterPro" id="IPR012310">
    <property type="entry name" value="DNA_ligase_ATP-dep_cent"/>
</dbReference>
<dbReference type="InterPro" id="IPR016059">
    <property type="entry name" value="DNA_ligase_ATP-dep_CS"/>
</dbReference>
<dbReference type="InterPro" id="IPR012308">
    <property type="entry name" value="DNA_ligase_ATP-dep_N"/>
</dbReference>
<dbReference type="InterPro" id="IPR036599">
    <property type="entry name" value="DNA_ligase_N_sf"/>
</dbReference>
<dbReference type="InterPro" id="IPR012340">
    <property type="entry name" value="NA-bd_OB-fold"/>
</dbReference>
<dbReference type="NCBIfam" id="TIGR00574">
    <property type="entry name" value="dnl1"/>
    <property type="match status" value="1"/>
</dbReference>
<dbReference type="NCBIfam" id="NF002868">
    <property type="entry name" value="PRK03180.1"/>
    <property type="match status" value="1"/>
</dbReference>
<dbReference type="PANTHER" id="PTHR45674">
    <property type="entry name" value="DNA LIGASE 1/3 FAMILY MEMBER"/>
    <property type="match status" value="1"/>
</dbReference>
<dbReference type="PANTHER" id="PTHR45674:SF13">
    <property type="entry name" value="DNA LIGASE-RELATED"/>
    <property type="match status" value="1"/>
</dbReference>
<dbReference type="Pfam" id="PF04679">
    <property type="entry name" value="DNA_ligase_A_C"/>
    <property type="match status" value="1"/>
</dbReference>
<dbReference type="Pfam" id="PF01068">
    <property type="entry name" value="DNA_ligase_A_M"/>
    <property type="match status" value="1"/>
</dbReference>
<dbReference type="Pfam" id="PF04675">
    <property type="entry name" value="DNA_ligase_A_N"/>
    <property type="match status" value="1"/>
</dbReference>
<dbReference type="SUPFAM" id="SSF117018">
    <property type="entry name" value="ATP-dependent DNA ligase DNA-binding domain"/>
    <property type="match status" value="1"/>
</dbReference>
<dbReference type="SUPFAM" id="SSF56091">
    <property type="entry name" value="DNA ligase/mRNA capping enzyme, catalytic domain"/>
    <property type="match status" value="1"/>
</dbReference>
<dbReference type="SUPFAM" id="SSF50249">
    <property type="entry name" value="Nucleic acid-binding proteins"/>
    <property type="match status" value="1"/>
</dbReference>
<dbReference type="PROSITE" id="PS00697">
    <property type="entry name" value="DNA_LIGASE_A1"/>
    <property type="match status" value="1"/>
</dbReference>
<dbReference type="PROSITE" id="PS50160">
    <property type="entry name" value="DNA_LIGASE_A3"/>
    <property type="match status" value="1"/>
</dbReference>
<organism>
    <name type="scientific">Pseudarthrobacter chlorophenolicus (strain ATCC 700700 / DSM 12829 / CIP 107037 / JCM 12360 / KCTC 9906 / NCIMB 13794 / A6)</name>
    <name type="common">Arthrobacter chlorophenolicus</name>
    <dbReference type="NCBI Taxonomy" id="452863"/>
    <lineage>
        <taxon>Bacteria</taxon>
        <taxon>Bacillati</taxon>
        <taxon>Actinomycetota</taxon>
        <taxon>Actinomycetes</taxon>
        <taxon>Micrococcales</taxon>
        <taxon>Micrococcaceae</taxon>
        <taxon>Pseudarthrobacter</taxon>
    </lineage>
</organism>
<sequence>MLLDELVRTTDAVASTRSRLAKVDALAQLLKRLDPADIPAAVGLLTAKPRQGRVGVGWRGMSAAMGEPAADPGLTLADLDAALDRLQALAGAGSAAERAATLRGLTAAATEREQAFIGGVLLGELRTGALEGVLTDAVARAAERSVEAVRRAAMLSGDLGSTALLALTGTAAELDAVGLKVGRPVQPMLAGTGASVTAALETTGEASVEYKLDGARIQVHRSGGDVRIFTRTLAEVTHRLPEVVEVVRGFPVHDVILDGETLALGEDGAPRPFQETMSRFGADAARTTVLHPWFFDVLHIDGRDLLDEPLSERIKVLEAIAPAHRIPGEITADPEVAGRISRDALAAGHEGVMLKSVGSLYAAGRRGSNWIKVKPVLTYDLVVLACEWGSGRRTGMLSNLHLGALDPAGEYGEPGGYVMVGKTFKGLTDALLQWQTKRFQEIEVRRTAGTVWVEPVTVVEIAIDGVQQSPRYPGRIALRFARVKGYREDKTAAEADTIQTLRALLRP</sequence>
<reference key="1">
    <citation type="submission" date="2009-01" db="EMBL/GenBank/DDBJ databases">
        <title>Complete sequence of chromosome of Arthrobacter chlorophenolicus A6.</title>
        <authorList>
            <consortium name="US DOE Joint Genome Institute"/>
            <person name="Lucas S."/>
            <person name="Copeland A."/>
            <person name="Lapidus A."/>
            <person name="Glavina del Rio T."/>
            <person name="Tice H."/>
            <person name="Bruce D."/>
            <person name="Goodwin L."/>
            <person name="Pitluck S."/>
            <person name="Goltsman E."/>
            <person name="Clum A."/>
            <person name="Larimer F."/>
            <person name="Land M."/>
            <person name="Hauser L."/>
            <person name="Kyrpides N."/>
            <person name="Mikhailova N."/>
            <person name="Jansson J."/>
            <person name="Richardson P."/>
        </authorList>
    </citation>
    <scope>NUCLEOTIDE SEQUENCE [LARGE SCALE GENOMIC DNA]</scope>
    <source>
        <strain>ATCC 700700 / DSM 12829 / CIP 107037 / JCM 12360 / KCTC 9906 / NCIMB 13794 / A6</strain>
    </source>
</reference>
<protein>
    <recommendedName>
        <fullName evidence="1">Probable DNA ligase</fullName>
        <ecNumber evidence="1">6.5.1.1</ecNumber>
    </recommendedName>
    <alternativeName>
        <fullName evidence="1">Polydeoxyribonucleotide synthase [ATP]</fullName>
    </alternativeName>
</protein>
<name>DNLI_PSECP</name>
<accession>B8HCE1</accession>
<gene>
    <name evidence="1" type="primary">lig</name>
    <name type="ordered locus">Achl_2592</name>
</gene>